<feature type="chain" id="PRO_0000396868" description="Ubiquitin">
    <location>
        <begin position="1"/>
        <end position="76"/>
    </location>
</feature>
<feature type="chain" id="PRO_0000138767" description="Large ribosomal subunit protein eL40z">
    <location>
        <begin position="77"/>
        <end position="129"/>
    </location>
</feature>
<feature type="domain" description="Ubiquitin-like" evidence="2">
    <location>
        <begin position="1"/>
        <end position="76"/>
    </location>
</feature>
<feature type="cross-link" description="Glycyl lysine isopeptide (Lys-Gly) (interchain with G-Cter in ubiquitin)" evidence="1">
    <location>
        <position position="48"/>
    </location>
</feature>
<feature type="cross-link" description="Glycyl lysine isopeptide (Lys-Gly) (interchain with G-Cter in ubiquitin)" evidence="1">
    <location>
        <position position="63"/>
    </location>
</feature>
<feature type="cross-link" description="Glycyl lysine isopeptide (Gly-Lys) (interchain with K-? in acceptor proteins)" evidence="2">
    <location>
        <position position="76"/>
    </location>
</feature>
<comment type="function">
    <molecule>Ubiquitin</molecule>
    <text evidence="1">Exists either covalently attached to another protein, or free (unanchored). When covalently bound, it is conjugated to target proteins via an isopeptide bond either as a monomer (monoubiquitin), a polymer linked via different Lys residues of the ubiquitin (polyubiquitin chains) or a linear polymer linked via the initiator Met of the ubiquitin (linear polyubiquitin chains). Polyubiquitin chains, when attached to a target protein, have different functions depending on the Lys residue of the ubiquitin that is linked: Lys-48-linked is involved in protein degradation via the proteasome; Lys-63-linked is involved in endocytosis, and DNA-damage responses. Linear polymer chains formed via attachment by the initiator Met lead to cell signaling. Ubiquitin is usually conjugated to Lys residues of target proteins, however, in rare cases, conjugation to Cys or Ser residues has been observed. When polyubiquitin is free (unanchored-polyubiquitin), it also has distinct roles, such as in activation of protein kinases, and in signaling (By similarity).</text>
</comment>
<comment type="function">
    <molecule>Large ribosomal subunit protein eL40z</molecule>
    <text>Component of the 60S subunit of the ribosome.</text>
</comment>
<comment type="subunit">
    <molecule>Large ribosomal subunit protein eL40z</molecule>
    <text evidence="1">Part of the 60S ribosomal subunit.</text>
</comment>
<comment type="subcellular location">
    <molecule>Ubiquitin</molecule>
    <subcellularLocation>
        <location evidence="1">Cytoplasm</location>
    </subcellularLocation>
    <subcellularLocation>
        <location evidence="1">Nucleus</location>
    </subcellularLocation>
</comment>
<comment type="subcellular location">
    <molecule>Large ribosomal subunit protein eL40z</molecule>
    <subcellularLocation>
        <location evidence="1">Cytoplasm</location>
    </subcellularLocation>
</comment>
<comment type="miscellaneous">
    <text>Ubiquitin is generally synthesized as a polyubiquitin precursor with tandem head to tail repeats. Often, there are one to three additional amino acids after the last repeat, removed in the mature protein. Alternatively, ubiquitin extension protein is synthesized as a single copy of ubiquitin fused to a ribosomal protein (either eL40 or eS31) or to an ubiquitin-related protein (either RUB1 or RUB2). Following translation, extension protein is cleaved from ubiquitin.</text>
</comment>
<comment type="similarity">
    <text evidence="3">In the N-terminal section; belongs to the ubiquitin family.</text>
</comment>
<comment type="similarity">
    <text evidence="3">In the C-terminal section; belongs to the eukaryotic ribosomal protein eL40 family.</text>
</comment>
<comment type="sequence caution" evidence="3">
    <conflict type="erroneous gene model prediction">
        <sequence resource="EMBL-CDS" id="AAM19122"/>
    </conflict>
</comment>
<sequence>MQIFVKTLTGKTITLEVESSDTIDNVKAKIQDKEGIPPDQQRLIFAGKQLEDGRTLADYNIQKESTLHLVLRLRGGIIEPSLQALARKYNQDKMICRKCYARLHPRAVNCRKKKCGHSNQLRPKKKIKN</sequence>
<accession>P0CH34</accession>
<accession>O82079</accession>
<accession>P03993</accession>
<accession>P35296</accession>
<accession>P69321</accession>
<accession>Q10PH1</accession>
<accession>Q652Q2</accession>
<accession>Q67UR4</accession>
<accession>Q69P70</accession>
<accession>Q6ATC2</accession>
<accession>Q7XN78</accession>
<accession>Q8S5Y3</accession>
<accession>Q9AR09</accession>
<name>RL40A_ORYSJ</name>
<evidence type="ECO:0000250" key="1"/>
<evidence type="ECO:0000255" key="2">
    <source>
        <dbReference type="PROSITE-ProRule" id="PRU00214"/>
    </source>
</evidence>
<evidence type="ECO:0000305" key="3"/>
<evidence type="ECO:0000312" key="4">
    <source>
        <dbReference type="EMBL" id="EAZ45723.1"/>
    </source>
</evidence>
<proteinExistence type="evidence at protein level"/>
<keyword id="KW-0002">3D-structure</keyword>
<keyword id="KW-0963">Cytoplasm</keyword>
<keyword id="KW-1017">Isopeptide bond</keyword>
<keyword id="KW-0539">Nucleus</keyword>
<keyword id="KW-1185">Reference proteome</keyword>
<keyword id="KW-0687">Ribonucleoprotein</keyword>
<keyword id="KW-0689">Ribosomal protein</keyword>
<keyword id="KW-0832">Ubl conjugation</keyword>
<reference key="1">
    <citation type="journal article" date="1993" name="Plant Mol. Biol.">
        <title>Isolation and characterization of a rice cDNA which encodes a ubiquitin protein and a 52 amino acid extension protein.</title>
        <authorList>
            <person name="Nishi P."/>
            <person name="Hashimoto H."/>
            <person name="Kidou S."/>
            <person name="Uchimiya H."/>
            <person name="Kato A."/>
        </authorList>
    </citation>
    <scope>NUCLEOTIDE SEQUENCE [MRNA]</scope>
    <source>
        <strain>cv. Yamahoushi</strain>
        <tissue>Callus</tissue>
    </source>
</reference>
<reference key="2">
    <citation type="journal article" date="2001" name="DNA Seq.">
        <title>Isolation and characterization of two genes encoding ubiquitin fused to a ribosomal protein of 53 amino acids in rice.</title>
        <authorList>
            <person name="Kato A."/>
            <person name="Nishi R."/>
            <person name="Ozaki M."/>
        </authorList>
    </citation>
    <scope>NUCLEOTIDE SEQUENCE [GENOMIC DNA]</scope>
</reference>
<reference key="3">
    <citation type="journal article" date="2005" name="Genome Res.">
        <title>Sequence, annotation, and analysis of synteny between rice chromosome 3 and diverged grass species.</title>
        <authorList>
            <consortium name="The rice chromosome 3 sequencing consortium"/>
            <person name="Buell C.R."/>
            <person name="Yuan Q."/>
            <person name="Ouyang S."/>
            <person name="Liu J."/>
            <person name="Zhu W."/>
            <person name="Wang A."/>
            <person name="Maiti R."/>
            <person name="Haas B."/>
            <person name="Wortman J."/>
            <person name="Pertea M."/>
            <person name="Jones K.M."/>
            <person name="Kim M."/>
            <person name="Overton L."/>
            <person name="Tsitrin T."/>
            <person name="Fadrosh D."/>
            <person name="Bera J."/>
            <person name="Weaver B."/>
            <person name="Jin S."/>
            <person name="Johri S."/>
            <person name="Reardon M."/>
            <person name="Webb K."/>
            <person name="Hill J."/>
            <person name="Moffat K."/>
            <person name="Tallon L."/>
            <person name="Van Aken S."/>
            <person name="Lewis M."/>
            <person name="Utterback T."/>
            <person name="Feldblyum T."/>
            <person name="Zismann V."/>
            <person name="Iobst S."/>
            <person name="Hsiao J."/>
            <person name="de Vazeille A.R."/>
            <person name="Salzberg S.L."/>
            <person name="White O."/>
            <person name="Fraser C.M."/>
            <person name="Yu Y."/>
            <person name="Kim H."/>
            <person name="Rambo T."/>
            <person name="Currie J."/>
            <person name="Collura K."/>
            <person name="Kernodle-Thompson S."/>
            <person name="Wei F."/>
            <person name="Kudrna K."/>
            <person name="Ammiraju J.S.S."/>
            <person name="Luo M."/>
            <person name="Goicoechea J.L."/>
            <person name="Wing R.A."/>
            <person name="Henry D."/>
            <person name="Oates R."/>
            <person name="Palmer M."/>
            <person name="Pries G."/>
            <person name="Saski C."/>
            <person name="Simmons J."/>
            <person name="Soderlund C."/>
            <person name="Nelson W."/>
            <person name="de la Bastide M."/>
            <person name="Spiegel L."/>
            <person name="Nascimento L."/>
            <person name="Huang E."/>
            <person name="Preston R."/>
            <person name="Zutavern T."/>
            <person name="Palmer L."/>
            <person name="O'Shaughnessy A."/>
            <person name="Dike S."/>
            <person name="McCombie W.R."/>
            <person name="Minx P."/>
            <person name="Cordum H."/>
            <person name="Wilson R."/>
            <person name="Jin W."/>
            <person name="Lee H.R."/>
            <person name="Jiang J."/>
            <person name="Jackson S."/>
        </authorList>
    </citation>
    <scope>NUCLEOTIDE SEQUENCE [LARGE SCALE GENOMIC DNA]</scope>
    <source>
        <strain>cv. Nipponbare</strain>
    </source>
</reference>
<reference key="4">
    <citation type="journal article" date="2005" name="Nature">
        <title>The map-based sequence of the rice genome.</title>
        <authorList>
            <consortium name="International rice genome sequencing project (IRGSP)"/>
        </authorList>
    </citation>
    <scope>NUCLEOTIDE SEQUENCE [LARGE SCALE GENOMIC DNA]</scope>
    <source>
        <strain>cv. Nipponbare</strain>
    </source>
</reference>
<reference key="5">
    <citation type="journal article" date="2008" name="Nucleic Acids Res.">
        <title>The rice annotation project database (RAP-DB): 2008 update.</title>
        <authorList>
            <consortium name="The rice annotation project (RAP)"/>
        </authorList>
    </citation>
    <scope>GENOME REANNOTATION</scope>
    <source>
        <strain>cv. Nipponbare</strain>
    </source>
</reference>
<reference key="6">
    <citation type="journal article" date="2013" name="Rice">
        <title>Improvement of the Oryza sativa Nipponbare reference genome using next generation sequence and optical map data.</title>
        <authorList>
            <person name="Kawahara Y."/>
            <person name="de la Bastide M."/>
            <person name="Hamilton J.P."/>
            <person name="Kanamori H."/>
            <person name="McCombie W.R."/>
            <person name="Ouyang S."/>
            <person name="Schwartz D.C."/>
            <person name="Tanaka T."/>
            <person name="Wu J."/>
            <person name="Zhou S."/>
            <person name="Childs K.L."/>
            <person name="Davidson R.M."/>
            <person name="Lin H."/>
            <person name="Quesada-Ocampo L."/>
            <person name="Vaillancourt B."/>
            <person name="Sakai H."/>
            <person name="Lee S.S."/>
            <person name="Kim J."/>
            <person name="Numa H."/>
            <person name="Itoh T."/>
            <person name="Buell C.R."/>
            <person name="Matsumoto T."/>
        </authorList>
    </citation>
    <scope>GENOME REANNOTATION</scope>
    <source>
        <strain>cv. Nipponbare</strain>
    </source>
</reference>
<reference key="7">
    <citation type="journal article" date="2005" name="PLoS Biol.">
        <title>The genomes of Oryza sativa: a history of duplications.</title>
        <authorList>
            <person name="Yu J."/>
            <person name="Wang J."/>
            <person name="Lin W."/>
            <person name="Li S."/>
            <person name="Li H."/>
            <person name="Zhou J."/>
            <person name="Ni P."/>
            <person name="Dong W."/>
            <person name="Hu S."/>
            <person name="Zeng C."/>
            <person name="Zhang J."/>
            <person name="Zhang Y."/>
            <person name="Li R."/>
            <person name="Xu Z."/>
            <person name="Li S."/>
            <person name="Li X."/>
            <person name="Zheng H."/>
            <person name="Cong L."/>
            <person name="Lin L."/>
            <person name="Yin J."/>
            <person name="Geng J."/>
            <person name="Li G."/>
            <person name="Shi J."/>
            <person name="Liu J."/>
            <person name="Lv H."/>
            <person name="Li J."/>
            <person name="Wang J."/>
            <person name="Deng Y."/>
            <person name="Ran L."/>
            <person name="Shi X."/>
            <person name="Wang X."/>
            <person name="Wu Q."/>
            <person name="Li C."/>
            <person name="Ren X."/>
            <person name="Wang J."/>
            <person name="Wang X."/>
            <person name="Li D."/>
            <person name="Liu D."/>
            <person name="Zhang X."/>
            <person name="Ji Z."/>
            <person name="Zhao W."/>
            <person name="Sun Y."/>
            <person name="Zhang Z."/>
            <person name="Bao J."/>
            <person name="Han Y."/>
            <person name="Dong L."/>
            <person name="Ji J."/>
            <person name="Chen P."/>
            <person name="Wu S."/>
            <person name="Liu J."/>
            <person name="Xiao Y."/>
            <person name="Bu D."/>
            <person name="Tan J."/>
            <person name="Yang L."/>
            <person name="Ye C."/>
            <person name="Zhang J."/>
            <person name="Xu J."/>
            <person name="Zhou Y."/>
            <person name="Yu Y."/>
            <person name="Zhang B."/>
            <person name="Zhuang S."/>
            <person name="Wei H."/>
            <person name="Liu B."/>
            <person name="Lei M."/>
            <person name="Yu H."/>
            <person name="Li Y."/>
            <person name="Xu H."/>
            <person name="Wei S."/>
            <person name="He X."/>
            <person name="Fang L."/>
            <person name="Zhang Z."/>
            <person name="Zhang Y."/>
            <person name="Huang X."/>
            <person name="Su Z."/>
            <person name="Tong W."/>
            <person name="Li J."/>
            <person name="Tong Z."/>
            <person name="Li S."/>
            <person name="Ye J."/>
            <person name="Wang L."/>
            <person name="Fang L."/>
            <person name="Lei T."/>
            <person name="Chen C.-S."/>
            <person name="Chen H.-C."/>
            <person name="Xu Z."/>
            <person name="Li H."/>
            <person name="Huang H."/>
            <person name="Zhang F."/>
            <person name="Xu H."/>
            <person name="Li N."/>
            <person name="Zhao C."/>
            <person name="Li S."/>
            <person name="Dong L."/>
            <person name="Huang Y."/>
            <person name="Li L."/>
            <person name="Xi Y."/>
            <person name="Qi Q."/>
            <person name="Li W."/>
            <person name="Zhang B."/>
            <person name="Hu W."/>
            <person name="Zhang Y."/>
            <person name="Tian X."/>
            <person name="Jiao Y."/>
            <person name="Liang X."/>
            <person name="Jin J."/>
            <person name="Gao L."/>
            <person name="Zheng W."/>
            <person name="Hao B."/>
            <person name="Liu S.-M."/>
            <person name="Wang W."/>
            <person name="Yuan L."/>
            <person name="Cao M."/>
            <person name="McDermott J."/>
            <person name="Samudrala R."/>
            <person name="Wang J."/>
            <person name="Wong G.K.-S."/>
            <person name="Yang H."/>
        </authorList>
    </citation>
    <scope>NUCLEOTIDE SEQUENCE [LARGE SCALE GENOMIC DNA]</scope>
    <source>
        <strain>cv. Nipponbare</strain>
    </source>
</reference>
<protein>
    <recommendedName>
        <fullName evidence="3">Ubiquitin-ribosomal protein eL40z fusion protein</fullName>
    </recommendedName>
    <component>
        <recommendedName>
            <fullName>Ubiquitin</fullName>
        </recommendedName>
    </component>
    <component>
        <recommendedName>
            <fullName evidence="3">Large ribosomal subunit protein eL40z</fullName>
        </recommendedName>
        <alternativeName>
            <fullName>60S ribosomal protein L40-1</fullName>
        </alternativeName>
        <alternativeName>
            <fullName>CEP52</fullName>
        </alternativeName>
    </component>
</protein>
<gene>
    <name type="primary">Ub-CEP52-1</name>
    <name type="synonym">UBQ1</name>
    <name type="ordered locus">Os03g0234200</name>
    <name type="ordered locus">LOC_Os03g13170</name>
    <name type="ORF">OJ1175C11.2</name>
    <name evidence="4" type="ORF">OsJ_30399</name>
</gene>
<dbReference type="EMBL" id="D12629">
    <property type="protein sequence ID" value="BAA02154.1"/>
    <property type="molecule type" value="mRNA"/>
</dbReference>
<dbReference type="EMBL" id="AB047855">
    <property type="protein sequence ID" value="BAB33149.1"/>
    <property type="molecule type" value="Genomic_DNA"/>
</dbReference>
<dbReference type="EMBL" id="AC103891">
    <property type="protein sequence ID" value="AAM19122.1"/>
    <property type="status" value="ALT_SEQ"/>
    <property type="molecule type" value="Genomic_DNA"/>
</dbReference>
<dbReference type="EMBL" id="DP000009">
    <property type="protein sequence ID" value="ABF94825.1"/>
    <property type="molecule type" value="Genomic_DNA"/>
</dbReference>
<dbReference type="EMBL" id="AP008209">
    <property type="protein sequence ID" value="BAF11393.1"/>
    <property type="molecule type" value="Genomic_DNA"/>
</dbReference>
<dbReference type="EMBL" id="AP014959">
    <property type="status" value="NOT_ANNOTATED_CDS"/>
    <property type="molecule type" value="Genomic_DNA"/>
</dbReference>
<dbReference type="EMBL" id="CM000146">
    <property type="protein sequence ID" value="EAZ45723.1"/>
    <property type="molecule type" value="Genomic_DNA"/>
</dbReference>
<dbReference type="PIR" id="S33633">
    <property type="entry name" value="S33633"/>
</dbReference>
<dbReference type="RefSeq" id="XP_015629795.1">
    <property type="nucleotide sequence ID" value="XM_015774309.1"/>
</dbReference>
<dbReference type="RefSeq" id="XP_015651280.1">
    <property type="nucleotide sequence ID" value="XM_015795794.1"/>
</dbReference>
<dbReference type="PDB" id="8YSY">
    <property type="method" value="NMR"/>
    <property type="chains" value="A=1-76"/>
</dbReference>
<dbReference type="PDB" id="8YUM">
    <property type="method" value="NMR"/>
    <property type="chains" value="A=1-76"/>
</dbReference>
<dbReference type="PDBsum" id="8YSY"/>
<dbReference type="PDBsum" id="8YUM"/>
<dbReference type="SMR" id="P0CH34"/>
<dbReference type="FunCoup" id="P0CH34">
    <property type="interactions" value="2152"/>
</dbReference>
<dbReference type="STRING" id="39947.P0CH34"/>
<dbReference type="PaxDb" id="39947-P0CH34"/>
<dbReference type="KEGG" id="dosa:Os03g0234200"/>
<dbReference type="InParanoid" id="P0CH34"/>
<dbReference type="OrthoDB" id="1649877at2759"/>
<dbReference type="Proteomes" id="UP000000763">
    <property type="component" value="Chromosome 3"/>
</dbReference>
<dbReference type="Proteomes" id="UP000007752">
    <property type="component" value="Chromosome 9"/>
</dbReference>
<dbReference type="Proteomes" id="UP000059680">
    <property type="component" value="Chromosome 3"/>
</dbReference>
<dbReference type="GO" id="GO:0005737">
    <property type="term" value="C:cytoplasm"/>
    <property type="evidence" value="ECO:0000318"/>
    <property type="project" value="GO_Central"/>
</dbReference>
<dbReference type="GO" id="GO:0005634">
    <property type="term" value="C:nucleus"/>
    <property type="evidence" value="ECO:0000318"/>
    <property type="project" value="GO_Central"/>
</dbReference>
<dbReference type="GO" id="GO:1990904">
    <property type="term" value="C:ribonucleoprotein complex"/>
    <property type="evidence" value="ECO:0007669"/>
    <property type="project" value="UniProtKB-KW"/>
</dbReference>
<dbReference type="GO" id="GO:0005840">
    <property type="term" value="C:ribosome"/>
    <property type="evidence" value="ECO:0007669"/>
    <property type="project" value="UniProtKB-KW"/>
</dbReference>
<dbReference type="GO" id="GO:0003729">
    <property type="term" value="F:mRNA binding"/>
    <property type="evidence" value="ECO:0007669"/>
    <property type="project" value="UniProtKB-ARBA"/>
</dbReference>
<dbReference type="GO" id="GO:0031386">
    <property type="term" value="F:protein tag activity"/>
    <property type="evidence" value="ECO:0000318"/>
    <property type="project" value="GO_Central"/>
</dbReference>
<dbReference type="GO" id="GO:0003735">
    <property type="term" value="F:structural constituent of ribosome"/>
    <property type="evidence" value="ECO:0007669"/>
    <property type="project" value="InterPro"/>
</dbReference>
<dbReference type="GO" id="GO:0031625">
    <property type="term" value="F:ubiquitin protein ligase binding"/>
    <property type="evidence" value="ECO:0000318"/>
    <property type="project" value="GO_Central"/>
</dbReference>
<dbReference type="GO" id="GO:0019941">
    <property type="term" value="P:modification-dependent protein catabolic process"/>
    <property type="evidence" value="ECO:0000318"/>
    <property type="project" value="GO_Central"/>
</dbReference>
<dbReference type="GO" id="GO:0016567">
    <property type="term" value="P:protein ubiquitination"/>
    <property type="evidence" value="ECO:0000318"/>
    <property type="project" value="GO_Central"/>
</dbReference>
<dbReference type="GO" id="GO:0006412">
    <property type="term" value="P:translation"/>
    <property type="evidence" value="ECO:0007669"/>
    <property type="project" value="InterPro"/>
</dbReference>
<dbReference type="CDD" id="cd01803">
    <property type="entry name" value="Ubl_ubiquitin"/>
    <property type="match status" value="1"/>
</dbReference>
<dbReference type="FunFam" id="3.10.20.90:FF:000014">
    <property type="entry name" value="Ubiquitin-60S ribosomal L40 fusion"/>
    <property type="match status" value="1"/>
</dbReference>
<dbReference type="FunFam" id="4.10.1060.50:FF:000001">
    <property type="entry name" value="ubiquitin-60S ribosomal protein L40"/>
    <property type="match status" value="1"/>
</dbReference>
<dbReference type="Gene3D" id="4.10.1060.50">
    <property type="match status" value="1"/>
</dbReference>
<dbReference type="Gene3D" id="3.10.20.90">
    <property type="entry name" value="Phosphatidylinositol 3-kinase Catalytic Subunit, Chain A, domain 1"/>
    <property type="match status" value="1"/>
</dbReference>
<dbReference type="InterPro" id="IPR001975">
    <property type="entry name" value="Ribosomal_eL40_dom"/>
</dbReference>
<dbReference type="InterPro" id="IPR038587">
    <property type="entry name" value="Ribosomal_eL40_sf"/>
</dbReference>
<dbReference type="InterPro" id="IPR000626">
    <property type="entry name" value="Ubiquitin-like_dom"/>
</dbReference>
<dbReference type="InterPro" id="IPR029071">
    <property type="entry name" value="Ubiquitin-like_domsf"/>
</dbReference>
<dbReference type="InterPro" id="IPR019954">
    <property type="entry name" value="Ubiquitin_CS"/>
</dbReference>
<dbReference type="InterPro" id="IPR019956">
    <property type="entry name" value="Ubiquitin_dom"/>
</dbReference>
<dbReference type="InterPro" id="IPR050158">
    <property type="entry name" value="Ubiquitin_ubiquitin-like"/>
</dbReference>
<dbReference type="PANTHER" id="PTHR10666">
    <property type="entry name" value="UBIQUITIN"/>
    <property type="match status" value="1"/>
</dbReference>
<dbReference type="Pfam" id="PF01020">
    <property type="entry name" value="Ribosomal_L40e"/>
    <property type="match status" value="1"/>
</dbReference>
<dbReference type="Pfam" id="PF00240">
    <property type="entry name" value="ubiquitin"/>
    <property type="match status" value="1"/>
</dbReference>
<dbReference type="PRINTS" id="PR00348">
    <property type="entry name" value="UBIQUITIN"/>
</dbReference>
<dbReference type="SMART" id="SM01377">
    <property type="entry name" value="Ribosomal_L40e"/>
    <property type="match status" value="1"/>
</dbReference>
<dbReference type="SMART" id="SM00213">
    <property type="entry name" value="UBQ"/>
    <property type="match status" value="1"/>
</dbReference>
<dbReference type="SUPFAM" id="SSF54236">
    <property type="entry name" value="Ubiquitin-like"/>
    <property type="match status" value="1"/>
</dbReference>
<dbReference type="PROSITE" id="PS00299">
    <property type="entry name" value="UBIQUITIN_1"/>
    <property type="match status" value="1"/>
</dbReference>
<dbReference type="PROSITE" id="PS50053">
    <property type="entry name" value="UBIQUITIN_2"/>
    <property type="match status" value="1"/>
</dbReference>
<organism>
    <name type="scientific">Oryza sativa subsp. japonica</name>
    <name type="common">Rice</name>
    <dbReference type="NCBI Taxonomy" id="39947"/>
    <lineage>
        <taxon>Eukaryota</taxon>
        <taxon>Viridiplantae</taxon>
        <taxon>Streptophyta</taxon>
        <taxon>Embryophyta</taxon>
        <taxon>Tracheophyta</taxon>
        <taxon>Spermatophyta</taxon>
        <taxon>Magnoliopsida</taxon>
        <taxon>Liliopsida</taxon>
        <taxon>Poales</taxon>
        <taxon>Poaceae</taxon>
        <taxon>BOP clade</taxon>
        <taxon>Oryzoideae</taxon>
        <taxon>Oryzeae</taxon>
        <taxon>Oryzinae</taxon>
        <taxon>Oryza</taxon>
        <taxon>Oryza sativa</taxon>
    </lineage>
</organism>